<sequence length="102" mass="11244">MEKLQKMTSEKSLVIFSKNSCCMSHTIKTLFLDLGVNPTIYELDEINRGKEIEQALAQLGCSPTVPVVFIGGQLVGGANQVMSLHLNRSLIPMLKRVGALWL</sequence>
<evidence type="ECO:0000250" key="1"/>
<evidence type="ECO:0000255" key="2"/>
<evidence type="ECO:0000255" key="3">
    <source>
        <dbReference type="PROSITE-ProRule" id="PRU00686"/>
    </source>
</evidence>
<evidence type="ECO:0000305" key="4"/>
<protein>
    <recommendedName>
        <fullName>Monothiol glutaredoxin-S7</fullName>
        <shortName>AtGrxS7</shortName>
    </recommendedName>
    <alternativeName>
        <fullName>Protein ROXY 14</fullName>
    </alternativeName>
</protein>
<comment type="function">
    <text evidence="4">May only reduce GSH-thiol disulfides, but not protein disulfides.</text>
</comment>
<comment type="interaction">
    <interactant intactId="EBI-25521272">
        <id>Q6NLU2</id>
    </interactant>
    <interactant intactId="EBI-541351">
        <id>Q39237</id>
        <label>TGA1</label>
    </interactant>
    <organismsDiffer>false</organismsDiffer>
    <experiments>3</experiments>
</comment>
<comment type="interaction">
    <interactant intactId="EBI-25521272">
        <id>Q6NLU2</id>
    </interactant>
    <interactant intactId="EBI-541366">
        <id>Q39234</id>
        <label>TGA3</label>
    </interactant>
    <organismsDiffer>false</organismsDiffer>
    <experiments>3</experiments>
</comment>
<comment type="subcellular location">
    <subcellularLocation>
        <location evidence="1">Cytoplasm</location>
    </subcellularLocation>
    <subcellularLocation>
        <location evidence="1">Nucleus</location>
    </subcellularLocation>
</comment>
<comment type="similarity">
    <text evidence="4">Belongs to the glutaredoxin family. CC-type subfamily.</text>
</comment>
<comment type="sequence caution" evidence="4">
    <conflict type="erroneous initiation">
        <sequence resource="EMBL-CDS" id="AAS47604"/>
    </conflict>
</comment>
<comment type="sequence caution" evidence="4">
    <conflict type="erroneous initiation">
        <sequence resource="EMBL-CDS" id="AAS76724"/>
    </conflict>
</comment>
<gene>
    <name type="primary">GRXS7</name>
    <name type="synonym">ROXY14</name>
    <name type="ordered locus">At4g15670</name>
    <name type="ORF">dl3875w</name>
    <name type="ORF">FCAALL.355</name>
</gene>
<reference key="1">
    <citation type="journal article" date="2009" name="Plant Cell">
        <title>Nuclear activity of ROXY1, a glutaredoxin interacting with TGA factors, is required for petal development in Arabidopsis thaliana.</title>
        <authorList>
            <person name="Li S."/>
            <person name="Lauri A."/>
            <person name="Ziemann M."/>
            <person name="Busch A."/>
            <person name="Bhave M."/>
            <person name="Zachgo S."/>
        </authorList>
    </citation>
    <scope>NUCLEOTIDE SEQUENCE [MRNA]</scope>
    <scope>GENE FAMILY</scope>
</reference>
<reference key="2">
    <citation type="journal article" date="1998" name="Nature">
        <title>Analysis of 1.9 Mb of contiguous sequence from chromosome 4 of Arabidopsis thaliana.</title>
        <authorList>
            <person name="Bevan M."/>
            <person name="Bancroft I."/>
            <person name="Bent E."/>
            <person name="Love K."/>
            <person name="Goodman H.M."/>
            <person name="Dean C."/>
            <person name="Bergkamp R."/>
            <person name="Dirkse W."/>
            <person name="van Staveren M."/>
            <person name="Stiekema W."/>
            <person name="Drost L."/>
            <person name="Ridley P."/>
            <person name="Hudson S.-A."/>
            <person name="Patel K."/>
            <person name="Murphy G."/>
            <person name="Piffanelli P."/>
            <person name="Wedler H."/>
            <person name="Wedler E."/>
            <person name="Wambutt R."/>
            <person name="Weitzenegger T."/>
            <person name="Pohl T."/>
            <person name="Terryn N."/>
            <person name="Gielen J."/>
            <person name="Villarroel R."/>
            <person name="De Clercq R."/>
            <person name="van Montagu M."/>
            <person name="Lecharny A."/>
            <person name="Aubourg S."/>
            <person name="Gy I."/>
            <person name="Kreis M."/>
            <person name="Lao N."/>
            <person name="Kavanagh T."/>
            <person name="Hempel S."/>
            <person name="Kotter P."/>
            <person name="Entian K.-D."/>
            <person name="Rieger M."/>
            <person name="Schaefer M."/>
            <person name="Funk B."/>
            <person name="Mueller-Auer S."/>
            <person name="Silvey M."/>
            <person name="James R."/>
            <person name="Monfort A."/>
            <person name="Pons A."/>
            <person name="Puigdomenech P."/>
            <person name="Douka A."/>
            <person name="Voukelatou E."/>
            <person name="Milioni D."/>
            <person name="Hatzopoulos P."/>
            <person name="Piravandi E."/>
            <person name="Obermaier B."/>
            <person name="Hilbert H."/>
            <person name="Duesterhoeft A."/>
            <person name="Moores T."/>
            <person name="Jones J.D.G."/>
            <person name="Eneva T."/>
            <person name="Palme K."/>
            <person name="Benes V."/>
            <person name="Rechmann S."/>
            <person name="Ansorge W."/>
            <person name="Cooke R."/>
            <person name="Berger C."/>
            <person name="Delseny M."/>
            <person name="Voet M."/>
            <person name="Volckaert G."/>
            <person name="Mewes H.-W."/>
            <person name="Klosterman S."/>
            <person name="Schueller C."/>
            <person name="Chalwatzis N."/>
        </authorList>
    </citation>
    <scope>NUCLEOTIDE SEQUENCE [LARGE SCALE GENOMIC DNA]</scope>
    <source>
        <strain>cv. Columbia</strain>
    </source>
</reference>
<reference key="3">
    <citation type="journal article" date="1999" name="Nature">
        <title>Sequence and analysis of chromosome 4 of the plant Arabidopsis thaliana.</title>
        <authorList>
            <person name="Mayer K.F.X."/>
            <person name="Schueller C."/>
            <person name="Wambutt R."/>
            <person name="Murphy G."/>
            <person name="Volckaert G."/>
            <person name="Pohl T."/>
            <person name="Duesterhoeft A."/>
            <person name="Stiekema W."/>
            <person name="Entian K.-D."/>
            <person name="Terryn N."/>
            <person name="Harris B."/>
            <person name="Ansorge W."/>
            <person name="Brandt P."/>
            <person name="Grivell L.A."/>
            <person name="Rieger M."/>
            <person name="Weichselgartner M."/>
            <person name="de Simone V."/>
            <person name="Obermaier B."/>
            <person name="Mache R."/>
            <person name="Mueller M."/>
            <person name="Kreis M."/>
            <person name="Delseny M."/>
            <person name="Puigdomenech P."/>
            <person name="Watson M."/>
            <person name="Schmidtheini T."/>
            <person name="Reichert B."/>
            <person name="Portetelle D."/>
            <person name="Perez-Alonso M."/>
            <person name="Boutry M."/>
            <person name="Bancroft I."/>
            <person name="Vos P."/>
            <person name="Hoheisel J."/>
            <person name="Zimmermann W."/>
            <person name="Wedler H."/>
            <person name="Ridley P."/>
            <person name="Langham S.-A."/>
            <person name="McCullagh B."/>
            <person name="Bilham L."/>
            <person name="Robben J."/>
            <person name="van der Schueren J."/>
            <person name="Grymonprez B."/>
            <person name="Chuang Y.-J."/>
            <person name="Vandenbussche F."/>
            <person name="Braeken M."/>
            <person name="Weltjens I."/>
            <person name="Voet M."/>
            <person name="Bastiaens I."/>
            <person name="Aert R."/>
            <person name="Defoor E."/>
            <person name="Weitzenegger T."/>
            <person name="Bothe G."/>
            <person name="Ramsperger U."/>
            <person name="Hilbert H."/>
            <person name="Braun M."/>
            <person name="Holzer E."/>
            <person name="Brandt A."/>
            <person name="Peters S."/>
            <person name="van Staveren M."/>
            <person name="Dirkse W."/>
            <person name="Mooijman P."/>
            <person name="Klein Lankhorst R."/>
            <person name="Rose M."/>
            <person name="Hauf J."/>
            <person name="Koetter P."/>
            <person name="Berneiser S."/>
            <person name="Hempel S."/>
            <person name="Feldpausch M."/>
            <person name="Lamberth S."/>
            <person name="Van den Daele H."/>
            <person name="De Keyser A."/>
            <person name="Buysshaert C."/>
            <person name="Gielen J."/>
            <person name="Villarroel R."/>
            <person name="De Clercq R."/>
            <person name="van Montagu M."/>
            <person name="Rogers J."/>
            <person name="Cronin A."/>
            <person name="Quail M.A."/>
            <person name="Bray-Allen S."/>
            <person name="Clark L."/>
            <person name="Doggett J."/>
            <person name="Hall S."/>
            <person name="Kay M."/>
            <person name="Lennard N."/>
            <person name="McLay K."/>
            <person name="Mayes R."/>
            <person name="Pettett A."/>
            <person name="Rajandream M.A."/>
            <person name="Lyne M."/>
            <person name="Benes V."/>
            <person name="Rechmann S."/>
            <person name="Borkova D."/>
            <person name="Bloecker H."/>
            <person name="Scharfe M."/>
            <person name="Grimm M."/>
            <person name="Loehnert T.-H."/>
            <person name="Dose S."/>
            <person name="de Haan M."/>
            <person name="Maarse A.C."/>
            <person name="Schaefer M."/>
            <person name="Mueller-Auer S."/>
            <person name="Gabel C."/>
            <person name="Fuchs M."/>
            <person name="Fartmann B."/>
            <person name="Granderath K."/>
            <person name="Dauner D."/>
            <person name="Herzl A."/>
            <person name="Neumann S."/>
            <person name="Argiriou A."/>
            <person name="Vitale D."/>
            <person name="Liguori R."/>
            <person name="Piravandi E."/>
            <person name="Massenet O."/>
            <person name="Quigley F."/>
            <person name="Clabauld G."/>
            <person name="Muendlein A."/>
            <person name="Felber R."/>
            <person name="Schnabl S."/>
            <person name="Hiller R."/>
            <person name="Schmidt W."/>
            <person name="Lecharny A."/>
            <person name="Aubourg S."/>
            <person name="Chefdor F."/>
            <person name="Cooke R."/>
            <person name="Berger C."/>
            <person name="Monfort A."/>
            <person name="Casacuberta E."/>
            <person name="Gibbons T."/>
            <person name="Weber N."/>
            <person name="Vandenbol M."/>
            <person name="Bargues M."/>
            <person name="Terol J."/>
            <person name="Torres A."/>
            <person name="Perez-Perez A."/>
            <person name="Purnelle B."/>
            <person name="Bent E."/>
            <person name="Johnson S."/>
            <person name="Tacon D."/>
            <person name="Jesse T."/>
            <person name="Heijnen L."/>
            <person name="Schwarz S."/>
            <person name="Scholler P."/>
            <person name="Heber S."/>
            <person name="Francs P."/>
            <person name="Bielke C."/>
            <person name="Frishman D."/>
            <person name="Haase D."/>
            <person name="Lemcke K."/>
            <person name="Mewes H.-W."/>
            <person name="Stocker S."/>
            <person name="Zaccaria P."/>
            <person name="Bevan M."/>
            <person name="Wilson R.K."/>
            <person name="de la Bastide M."/>
            <person name="Habermann K."/>
            <person name="Parnell L."/>
            <person name="Dedhia N."/>
            <person name="Gnoj L."/>
            <person name="Schutz K."/>
            <person name="Huang E."/>
            <person name="Spiegel L."/>
            <person name="Sekhon M."/>
            <person name="Murray J."/>
            <person name="Sheet P."/>
            <person name="Cordes M."/>
            <person name="Abu-Threideh J."/>
            <person name="Stoneking T."/>
            <person name="Kalicki J."/>
            <person name="Graves T."/>
            <person name="Harmon G."/>
            <person name="Edwards J."/>
            <person name="Latreille P."/>
            <person name="Courtney L."/>
            <person name="Cloud J."/>
            <person name="Abbott A."/>
            <person name="Scott K."/>
            <person name="Johnson D."/>
            <person name="Minx P."/>
            <person name="Bentley D."/>
            <person name="Fulton B."/>
            <person name="Miller N."/>
            <person name="Greco T."/>
            <person name="Kemp K."/>
            <person name="Kramer J."/>
            <person name="Fulton L."/>
            <person name="Mardis E."/>
            <person name="Dante M."/>
            <person name="Pepin K."/>
            <person name="Hillier L.W."/>
            <person name="Nelson J."/>
            <person name="Spieth J."/>
            <person name="Ryan E."/>
            <person name="Andrews S."/>
            <person name="Geisel C."/>
            <person name="Layman D."/>
            <person name="Du H."/>
            <person name="Ali J."/>
            <person name="Berghoff A."/>
            <person name="Jones K."/>
            <person name="Drone K."/>
            <person name="Cotton M."/>
            <person name="Joshu C."/>
            <person name="Antonoiu B."/>
            <person name="Zidanic M."/>
            <person name="Strong C."/>
            <person name="Sun H."/>
            <person name="Lamar B."/>
            <person name="Yordan C."/>
            <person name="Ma P."/>
            <person name="Zhong J."/>
            <person name="Preston R."/>
            <person name="Vil D."/>
            <person name="Shekher M."/>
            <person name="Matero A."/>
            <person name="Shah R."/>
            <person name="Swaby I.K."/>
            <person name="O'Shaughnessy A."/>
            <person name="Rodriguez M."/>
            <person name="Hoffman J."/>
            <person name="Till S."/>
            <person name="Granat S."/>
            <person name="Shohdy N."/>
            <person name="Hasegawa A."/>
            <person name="Hameed A."/>
            <person name="Lodhi M."/>
            <person name="Johnson A."/>
            <person name="Chen E."/>
            <person name="Marra M.A."/>
            <person name="Martienssen R."/>
            <person name="McCombie W.R."/>
        </authorList>
    </citation>
    <scope>NUCLEOTIDE SEQUENCE [LARGE SCALE GENOMIC DNA]</scope>
    <source>
        <strain>cv. Columbia</strain>
    </source>
</reference>
<reference key="4">
    <citation type="journal article" date="2017" name="Plant J.">
        <title>Araport11: a complete reannotation of the Arabidopsis thaliana reference genome.</title>
        <authorList>
            <person name="Cheng C.Y."/>
            <person name="Krishnakumar V."/>
            <person name="Chan A.P."/>
            <person name="Thibaud-Nissen F."/>
            <person name="Schobel S."/>
            <person name="Town C.D."/>
        </authorList>
    </citation>
    <scope>GENOME REANNOTATION</scope>
    <source>
        <strain>cv. Columbia</strain>
    </source>
</reference>
<reference key="5">
    <citation type="submission" date="2004-03" db="EMBL/GenBank/DDBJ databases">
        <title>Arabidopsis ORF clones.</title>
        <authorList>
            <person name="Cheuk R.F."/>
            <person name="Chen H."/>
            <person name="Kim C.J."/>
            <person name="Shinn P."/>
            <person name="Ecker J.R."/>
        </authorList>
    </citation>
    <scope>NUCLEOTIDE SEQUENCE [LARGE SCALE MRNA]</scope>
    <source>
        <strain>cv. Columbia</strain>
    </source>
</reference>
<reference key="6">
    <citation type="journal article" date="2004" name="Cell. Mol. Life Sci.">
        <title>Plant glutaredoxins: still mysterious reducing systems.</title>
        <authorList>
            <person name="Rouhier N."/>
            <person name="Gelhaye E."/>
            <person name="Jacquot J.-P."/>
        </authorList>
    </citation>
    <scope>GENE FAMILY</scope>
    <scope>NOMENCLATURE</scope>
</reference>
<reference key="7">
    <citation type="journal article" date="2006" name="J. Exp. Bot.">
        <title>Genome-wide analysis of plant glutaredoxin systems.</title>
        <authorList>
            <person name="Rouhier N."/>
            <person name="Couturier J."/>
            <person name="Jacquot J.-P."/>
        </authorList>
    </citation>
    <scope>GENE FAMILY</scope>
</reference>
<accession>Q6NLU2</accession>
<accession>C1JGQ5</accession>
<accession>O23418</accession>
<feature type="chain" id="PRO_0000268728" description="Monothiol glutaredoxin-S7">
    <location>
        <begin position="1"/>
        <end position="102"/>
    </location>
</feature>
<feature type="domain" description="Glutaredoxin" evidence="3">
    <location>
        <begin position="1"/>
        <end position="101"/>
    </location>
</feature>
<feature type="short sequence motif" description="Responsive for interaction with TGA factors" evidence="1">
    <location>
        <begin position="99"/>
        <end position="102"/>
    </location>
</feature>
<feature type="binding site" evidence="2">
    <location>
        <position position="21"/>
    </location>
    <ligand>
        <name>[2Fe-2S] cluster</name>
        <dbReference type="ChEBI" id="CHEBI:190135"/>
        <note>ligand shared between dimeric partners</note>
    </ligand>
</feature>
<proteinExistence type="evidence at protein level"/>
<organism>
    <name type="scientific">Arabidopsis thaliana</name>
    <name type="common">Mouse-ear cress</name>
    <dbReference type="NCBI Taxonomy" id="3702"/>
    <lineage>
        <taxon>Eukaryota</taxon>
        <taxon>Viridiplantae</taxon>
        <taxon>Streptophyta</taxon>
        <taxon>Embryophyta</taxon>
        <taxon>Tracheophyta</taxon>
        <taxon>Spermatophyta</taxon>
        <taxon>Magnoliopsida</taxon>
        <taxon>eudicotyledons</taxon>
        <taxon>Gunneridae</taxon>
        <taxon>Pentapetalae</taxon>
        <taxon>rosids</taxon>
        <taxon>malvids</taxon>
        <taxon>Brassicales</taxon>
        <taxon>Brassicaceae</taxon>
        <taxon>Camelineae</taxon>
        <taxon>Arabidopsis</taxon>
    </lineage>
</organism>
<name>GRXS7_ARATH</name>
<keyword id="KW-0001">2Fe-2S</keyword>
<keyword id="KW-0963">Cytoplasm</keyword>
<keyword id="KW-0408">Iron</keyword>
<keyword id="KW-0411">Iron-sulfur</keyword>
<keyword id="KW-0479">Metal-binding</keyword>
<keyword id="KW-0539">Nucleus</keyword>
<keyword id="KW-0676">Redox-active center</keyword>
<keyword id="KW-1185">Reference proteome</keyword>
<dbReference type="EMBL" id="FJ611914">
    <property type="protein sequence ID" value="ACO50419.1"/>
    <property type="molecule type" value="mRNA"/>
</dbReference>
<dbReference type="EMBL" id="Z97339">
    <property type="protein sequence ID" value="CAB10345.1"/>
    <property type="molecule type" value="Genomic_DNA"/>
</dbReference>
<dbReference type="EMBL" id="AL161542">
    <property type="protein sequence ID" value="CAB78609.1"/>
    <property type="molecule type" value="Genomic_DNA"/>
</dbReference>
<dbReference type="EMBL" id="CP002687">
    <property type="protein sequence ID" value="AEE83634.1"/>
    <property type="molecule type" value="Genomic_DNA"/>
</dbReference>
<dbReference type="EMBL" id="BT011598">
    <property type="protein sequence ID" value="AAS47604.1"/>
    <property type="status" value="ALT_INIT"/>
    <property type="molecule type" value="mRNA"/>
</dbReference>
<dbReference type="EMBL" id="BT012237">
    <property type="protein sequence ID" value="AAS76724.1"/>
    <property type="status" value="ALT_INIT"/>
    <property type="molecule type" value="mRNA"/>
</dbReference>
<dbReference type="PIR" id="G71421">
    <property type="entry name" value="G71421"/>
</dbReference>
<dbReference type="RefSeq" id="NP_193302.1">
    <property type="nucleotide sequence ID" value="NM_117658.4"/>
</dbReference>
<dbReference type="SMR" id="Q6NLU2"/>
<dbReference type="BioGRID" id="12538">
    <property type="interactions" value="2"/>
</dbReference>
<dbReference type="FunCoup" id="Q6NLU2">
    <property type="interactions" value="25"/>
</dbReference>
<dbReference type="IntAct" id="Q6NLU2">
    <property type="interactions" value="2"/>
</dbReference>
<dbReference type="STRING" id="3702.Q6NLU2"/>
<dbReference type="PaxDb" id="3702-AT4G15670.1"/>
<dbReference type="ProteomicsDB" id="222312"/>
<dbReference type="EnsemblPlants" id="AT4G15670.1">
    <property type="protein sequence ID" value="AT4G15670.1"/>
    <property type="gene ID" value="AT4G15670"/>
</dbReference>
<dbReference type="GeneID" id="827244"/>
<dbReference type="Gramene" id="AT4G15670.1">
    <property type="protein sequence ID" value="AT4G15670.1"/>
    <property type="gene ID" value="AT4G15670"/>
</dbReference>
<dbReference type="KEGG" id="ath:AT4G15670"/>
<dbReference type="Araport" id="AT4G15670"/>
<dbReference type="TAIR" id="AT4G15670">
    <property type="gene designation" value="GRXS7"/>
</dbReference>
<dbReference type="eggNOG" id="KOG1752">
    <property type="taxonomic scope" value="Eukaryota"/>
</dbReference>
<dbReference type="HOGENOM" id="CLU_026126_6_0_1"/>
<dbReference type="InParanoid" id="Q6NLU2"/>
<dbReference type="OMA" id="IFDIYQY"/>
<dbReference type="OrthoDB" id="418495at2759"/>
<dbReference type="PhylomeDB" id="Q6NLU2"/>
<dbReference type="PRO" id="PR:Q6NLU2"/>
<dbReference type="Proteomes" id="UP000006548">
    <property type="component" value="Chromosome 4"/>
</dbReference>
<dbReference type="ExpressionAtlas" id="Q6NLU2">
    <property type="expression patterns" value="baseline and differential"/>
</dbReference>
<dbReference type="GO" id="GO:0005737">
    <property type="term" value="C:cytoplasm"/>
    <property type="evidence" value="ECO:0007669"/>
    <property type="project" value="UniProtKB-SubCell"/>
</dbReference>
<dbReference type="GO" id="GO:0005634">
    <property type="term" value="C:nucleus"/>
    <property type="evidence" value="ECO:0007669"/>
    <property type="project" value="UniProtKB-SubCell"/>
</dbReference>
<dbReference type="GO" id="GO:0051537">
    <property type="term" value="F:2 iron, 2 sulfur cluster binding"/>
    <property type="evidence" value="ECO:0007669"/>
    <property type="project" value="UniProtKB-KW"/>
</dbReference>
<dbReference type="GO" id="GO:0046872">
    <property type="term" value="F:metal ion binding"/>
    <property type="evidence" value="ECO:0007669"/>
    <property type="project" value="UniProtKB-KW"/>
</dbReference>
<dbReference type="CDD" id="cd03419">
    <property type="entry name" value="GRX_GRXh_1_2_like"/>
    <property type="match status" value="1"/>
</dbReference>
<dbReference type="FunFam" id="3.40.30.10:FF:000028">
    <property type="entry name" value="Glutaredoxin family protein"/>
    <property type="match status" value="1"/>
</dbReference>
<dbReference type="Gene3D" id="3.40.30.10">
    <property type="entry name" value="Glutaredoxin"/>
    <property type="match status" value="1"/>
</dbReference>
<dbReference type="InterPro" id="IPR011905">
    <property type="entry name" value="GlrX-like_pln_2"/>
</dbReference>
<dbReference type="InterPro" id="IPR002109">
    <property type="entry name" value="Glutaredoxin"/>
</dbReference>
<dbReference type="InterPro" id="IPR014025">
    <property type="entry name" value="Glutaredoxin_subgr"/>
</dbReference>
<dbReference type="InterPro" id="IPR036249">
    <property type="entry name" value="Thioredoxin-like_sf"/>
</dbReference>
<dbReference type="NCBIfam" id="TIGR02189">
    <property type="entry name" value="GlrX-like_plant"/>
    <property type="match status" value="1"/>
</dbReference>
<dbReference type="PANTHER" id="PTHR10168">
    <property type="entry name" value="GLUTAREDOXIN"/>
    <property type="match status" value="1"/>
</dbReference>
<dbReference type="Pfam" id="PF00462">
    <property type="entry name" value="Glutaredoxin"/>
    <property type="match status" value="1"/>
</dbReference>
<dbReference type="PRINTS" id="PR00160">
    <property type="entry name" value="GLUTAREDOXIN"/>
</dbReference>
<dbReference type="SUPFAM" id="SSF52833">
    <property type="entry name" value="Thioredoxin-like"/>
    <property type="match status" value="1"/>
</dbReference>
<dbReference type="PROSITE" id="PS51354">
    <property type="entry name" value="GLUTAREDOXIN_2"/>
    <property type="match status" value="1"/>
</dbReference>